<sequence length="612" mass="67980">MAFNNFTRLDAHSAAEKAVSVIGLGYDLCSDVRFSACKTTPDGSRLVEIDPTRNRDLIFPGGIVVNNVSSSIKCDKGERTRLRSDILSFNQMSEKFNQDMCLSGKIPSGMFNNMFAFSKCWPKDASSVKTLAYDGWFISLYSVEIVRKQLTLRDEVKREVPSSWDSAALAGFIEKYGTHVVVGVTMGGKDVIHVKQMRKSNHEPEEIQKMLKHWGDERFCVDPVESKSPASVYSGKPKEENLLQWGLQPFGTSVSSAVVMHTKNEEIMRVCIRRGGVDLGQSHERWLSTVSQAPNVISMCFVPITSLLSGLPGTGFLSHAVNLYLRYKPPIEELHQFLEFQLPRQWAPVYGDLPLGLRRSKQSSPSLQFSLMGPKLYVNTSKVDSGERPVTGLRFFLEGKKGNHLAIHLQHLSACPPSLHLSHDDTYEPIEEPVEKGYYVPVKWGIFSHVCTYPVQYNGARSDDTASIVTKAWLEVKGMGMRKVLFLRLGFSLDASAVTRKSCWDNLSTNSRKSGVFSMISTRLSTGLSPNPATTKPQSKIDINSAVYPRGPSPPVKPKLLSLVDTKEVMRGPEEQPGYWVVTGAKLCVEAGKISIKAKYSLLTVISEDSLV</sequence>
<proteinExistence type="evidence at transcript level"/>
<feature type="chain" id="PRO_0000415540" description="MACPF domain-containing protein NSL1">
    <location>
        <begin position="1"/>
        <end position="612"/>
    </location>
</feature>
<feature type="domain" description="MACPF" evidence="1">
    <location>
        <begin position="5"/>
        <end position="338"/>
    </location>
</feature>
<name>NSL1_ARATH</name>
<reference key="1">
    <citation type="journal article" date="2000" name="Nature">
        <title>Sequence and analysis of chromosome 1 of the plant Arabidopsis thaliana.</title>
        <authorList>
            <person name="Theologis A."/>
            <person name="Ecker J.R."/>
            <person name="Palm C.J."/>
            <person name="Federspiel N.A."/>
            <person name="Kaul S."/>
            <person name="White O."/>
            <person name="Alonso J."/>
            <person name="Altafi H."/>
            <person name="Araujo R."/>
            <person name="Bowman C.L."/>
            <person name="Brooks S.Y."/>
            <person name="Buehler E."/>
            <person name="Chan A."/>
            <person name="Chao Q."/>
            <person name="Chen H."/>
            <person name="Cheuk R.F."/>
            <person name="Chin C.W."/>
            <person name="Chung M.K."/>
            <person name="Conn L."/>
            <person name="Conway A.B."/>
            <person name="Conway A.R."/>
            <person name="Creasy T.H."/>
            <person name="Dewar K."/>
            <person name="Dunn P."/>
            <person name="Etgu P."/>
            <person name="Feldblyum T.V."/>
            <person name="Feng J.-D."/>
            <person name="Fong B."/>
            <person name="Fujii C.Y."/>
            <person name="Gill J.E."/>
            <person name="Goldsmith A.D."/>
            <person name="Haas B."/>
            <person name="Hansen N.F."/>
            <person name="Hughes B."/>
            <person name="Huizar L."/>
            <person name="Hunter J.L."/>
            <person name="Jenkins J."/>
            <person name="Johnson-Hopson C."/>
            <person name="Khan S."/>
            <person name="Khaykin E."/>
            <person name="Kim C.J."/>
            <person name="Koo H.L."/>
            <person name="Kremenetskaia I."/>
            <person name="Kurtz D.B."/>
            <person name="Kwan A."/>
            <person name="Lam B."/>
            <person name="Langin-Hooper S."/>
            <person name="Lee A."/>
            <person name="Lee J.M."/>
            <person name="Lenz C.A."/>
            <person name="Li J.H."/>
            <person name="Li Y.-P."/>
            <person name="Lin X."/>
            <person name="Liu S.X."/>
            <person name="Liu Z.A."/>
            <person name="Luros J.S."/>
            <person name="Maiti R."/>
            <person name="Marziali A."/>
            <person name="Militscher J."/>
            <person name="Miranda M."/>
            <person name="Nguyen M."/>
            <person name="Nierman W.C."/>
            <person name="Osborne B.I."/>
            <person name="Pai G."/>
            <person name="Peterson J."/>
            <person name="Pham P.K."/>
            <person name="Rizzo M."/>
            <person name="Rooney T."/>
            <person name="Rowley D."/>
            <person name="Sakano H."/>
            <person name="Salzberg S.L."/>
            <person name="Schwartz J.R."/>
            <person name="Shinn P."/>
            <person name="Southwick A.M."/>
            <person name="Sun H."/>
            <person name="Tallon L.J."/>
            <person name="Tambunga G."/>
            <person name="Toriumi M.J."/>
            <person name="Town C.D."/>
            <person name="Utterback T."/>
            <person name="Van Aken S."/>
            <person name="Vaysberg M."/>
            <person name="Vysotskaia V.S."/>
            <person name="Walker M."/>
            <person name="Wu D."/>
            <person name="Yu G."/>
            <person name="Fraser C.M."/>
            <person name="Venter J.C."/>
            <person name="Davis R.W."/>
        </authorList>
    </citation>
    <scope>NUCLEOTIDE SEQUENCE [LARGE SCALE GENOMIC DNA]</scope>
    <source>
        <strain>cv. Columbia</strain>
    </source>
</reference>
<reference key="2">
    <citation type="journal article" date="2017" name="Plant J.">
        <title>Araport11: a complete reannotation of the Arabidopsis thaliana reference genome.</title>
        <authorList>
            <person name="Cheng C.Y."/>
            <person name="Krishnakumar V."/>
            <person name="Chan A.P."/>
            <person name="Thibaud-Nissen F."/>
            <person name="Schobel S."/>
            <person name="Town C.D."/>
        </authorList>
    </citation>
    <scope>GENOME REANNOTATION</scope>
    <source>
        <strain>cv. Columbia</strain>
    </source>
</reference>
<reference key="3">
    <citation type="journal article" date="2003" name="Science">
        <title>Empirical analysis of transcriptional activity in the Arabidopsis genome.</title>
        <authorList>
            <person name="Yamada K."/>
            <person name="Lim J."/>
            <person name="Dale J.M."/>
            <person name="Chen H."/>
            <person name="Shinn P."/>
            <person name="Palm C.J."/>
            <person name="Southwick A.M."/>
            <person name="Wu H.C."/>
            <person name="Kim C.J."/>
            <person name="Nguyen M."/>
            <person name="Pham P.K."/>
            <person name="Cheuk R.F."/>
            <person name="Karlin-Newmann G."/>
            <person name="Liu S.X."/>
            <person name="Lam B."/>
            <person name="Sakano H."/>
            <person name="Wu T."/>
            <person name="Yu G."/>
            <person name="Miranda M."/>
            <person name="Quach H.L."/>
            <person name="Tripp M."/>
            <person name="Chang C.H."/>
            <person name="Lee J.M."/>
            <person name="Toriumi M.J."/>
            <person name="Chan M.M."/>
            <person name="Tang C.C."/>
            <person name="Onodera C.S."/>
            <person name="Deng J.M."/>
            <person name="Akiyama K."/>
            <person name="Ansari Y."/>
            <person name="Arakawa T."/>
            <person name="Banh J."/>
            <person name="Banno F."/>
            <person name="Bowser L."/>
            <person name="Brooks S.Y."/>
            <person name="Carninci P."/>
            <person name="Chao Q."/>
            <person name="Choy N."/>
            <person name="Enju A."/>
            <person name="Goldsmith A.D."/>
            <person name="Gurjal M."/>
            <person name="Hansen N.F."/>
            <person name="Hayashizaki Y."/>
            <person name="Johnson-Hopson C."/>
            <person name="Hsuan V.W."/>
            <person name="Iida K."/>
            <person name="Karnes M."/>
            <person name="Khan S."/>
            <person name="Koesema E."/>
            <person name="Ishida J."/>
            <person name="Jiang P.X."/>
            <person name="Jones T."/>
            <person name="Kawai J."/>
            <person name="Kamiya A."/>
            <person name="Meyers C."/>
            <person name="Nakajima M."/>
            <person name="Narusaka M."/>
            <person name="Seki M."/>
            <person name="Sakurai T."/>
            <person name="Satou M."/>
            <person name="Tamse R."/>
            <person name="Vaysberg M."/>
            <person name="Wallender E.K."/>
            <person name="Wong C."/>
            <person name="Yamamura Y."/>
            <person name="Yuan S."/>
            <person name="Shinozaki K."/>
            <person name="Davis R.W."/>
            <person name="Theologis A."/>
            <person name="Ecker J.R."/>
        </authorList>
    </citation>
    <scope>NUCLEOTIDE SEQUENCE [LARGE SCALE MRNA]</scope>
    <source>
        <strain>cv. Columbia</strain>
    </source>
</reference>
<reference key="4">
    <citation type="journal article" date="2006" name="Plant Mol. Biol.">
        <title>Loss of Necrotic Spotted Lesions 1 associates with cell death and defense responses in Arabidopsis thaliana.</title>
        <authorList>
            <person name="Noutoshi Y."/>
            <person name="Kuromori T."/>
            <person name="Wada T."/>
            <person name="Hirayama T."/>
            <person name="Kamiya A."/>
            <person name="Imura Y."/>
            <person name="Yasuda M."/>
            <person name="Nakashita H."/>
            <person name="Shirasu K."/>
            <person name="Shinozaki K."/>
        </authorList>
    </citation>
    <scope>FUNCTION</scope>
    <scope>DISRUPTION PHENOTYPE</scope>
    <scope>GENE FAMILY</scope>
</reference>
<protein>
    <recommendedName>
        <fullName>MACPF domain-containing protein NSL1</fullName>
    </recommendedName>
    <alternativeName>
        <fullName>Protein NECROTIC SPOTTED LESIONS 1</fullName>
        <shortName>Protein NSL1</shortName>
    </alternativeName>
</protein>
<gene>
    <name type="primary">NSL1</name>
    <name type="ordered locus">At1g28380</name>
    <name type="ORF">F3M18.18</name>
</gene>
<comment type="function">
    <text evidence="2">Negatively controls the salicylic acid (SA)-mediated pathway of programmed cell death in plant immunity.</text>
</comment>
<comment type="disruption phenotype">
    <text evidence="2">Constitutively activated HR-like cell death phenotype with endogenous accumulation of high levels of salicylic acid (SA) and constitutively activated defense phenotype. Dwarf plant with spotted necrotic lesions on its rosette and cauline leaves. Accumulation of high levels of callose and autofluorescent phenolic compounds localized to the necrotic lesions.</text>
</comment>
<comment type="similarity">
    <text evidence="3">Belongs to the complement C6/C7/C8/C9 (TC 1.C.39) family.</text>
</comment>
<evidence type="ECO:0000255" key="1">
    <source>
        <dbReference type="PROSITE-ProRule" id="PRU00745"/>
    </source>
</evidence>
<evidence type="ECO:0000269" key="2">
    <source>
    </source>
</evidence>
<evidence type="ECO:0000305" key="3"/>
<dbReference type="EMBL" id="AC010155">
    <property type="protein sequence ID" value="AAF16762.1"/>
    <property type="molecule type" value="Genomic_DNA"/>
</dbReference>
<dbReference type="EMBL" id="CP002684">
    <property type="protein sequence ID" value="AEE30965.1"/>
    <property type="molecule type" value="Genomic_DNA"/>
</dbReference>
<dbReference type="EMBL" id="AY059744">
    <property type="protein sequence ID" value="AAL24092.1"/>
    <property type="molecule type" value="mRNA"/>
</dbReference>
<dbReference type="EMBL" id="AY096632">
    <property type="protein sequence ID" value="AAM20282.1"/>
    <property type="molecule type" value="mRNA"/>
</dbReference>
<dbReference type="PIR" id="C86410">
    <property type="entry name" value="C86410"/>
</dbReference>
<dbReference type="RefSeq" id="NP_564307.1">
    <property type="nucleotide sequence ID" value="NM_102605.3"/>
</dbReference>
<dbReference type="FunCoup" id="Q9SGN6">
    <property type="interactions" value="985"/>
</dbReference>
<dbReference type="STRING" id="3702.Q9SGN6"/>
<dbReference type="TCDB" id="1.C.39.11.4">
    <property type="family name" value="the membrane attack complex/perforin (macpf) family"/>
</dbReference>
<dbReference type="iPTMnet" id="Q9SGN6"/>
<dbReference type="PaxDb" id="3702-AT1G28380.1"/>
<dbReference type="ProteomicsDB" id="249399"/>
<dbReference type="EnsemblPlants" id="AT1G28380.1">
    <property type="protein sequence ID" value="AT1G28380.1"/>
    <property type="gene ID" value="AT1G28380"/>
</dbReference>
<dbReference type="GeneID" id="839735"/>
<dbReference type="Gramene" id="AT1G28380.1">
    <property type="protein sequence ID" value="AT1G28380.1"/>
    <property type="gene ID" value="AT1G28380"/>
</dbReference>
<dbReference type="KEGG" id="ath:AT1G28380"/>
<dbReference type="Araport" id="AT1G28380"/>
<dbReference type="TAIR" id="AT1G28380">
    <property type="gene designation" value="NSL1"/>
</dbReference>
<dbReference type="eggNOG" id="ENOG502QQTT">
    <property type="taxonomic scope" value="Eukaryota"/>
</dbReference>
<dbReference type="HOGENOM" id="CLU_034245_1_0_1"/>
<dbReference type="InParanoid" id="Q9SGN6"/>
<dbReference type="OMA" id="WKEWIND"/>
<dbReference type="OrthoDB" id="1366754at2759"/>
<dbReference type="PhylomeDB" id="Q9SGN6"/>
<dbReference type="PRO" id="PR:Q9SGN6"/>
<dbReference type="Proteomes" id="UP000006548">
    <property type="component" value="Chromosome 1"/>
</dbReference>
<dbReference type="ExpressionAtlas" id="Q9SGN6">
    <property type="expression patterns" value="baseline and differential"/>
</dbReference>
<dbReference type="GO" id="GO:0005634">
    <property type="term" value="C:nucleus"/>
    <property type="evidence" value="ECO:0007005"/>
    <property type="project" value="TAIR"/>
</dbReference>
<dbReference type="GO" id="GO:0052542">
    <property type="term" value="P:defense response by callose deposition"/>
    <property type="evidence" value="ECO:0000315"/>
    <property type="project" value="TAIR"/>
</dbReference>
<dbReference type="GO" id="GO:0006955">
    <property type="term" value="P:immune response"/>
    <property type="evidence" value="ECO:0000315"/>
    <property type="project" value="UniProtKB"/>
</dbReference>
<dbReference type="GO" id="GO:0009626">
    <property type="term" value="P:plant-type hypersensitive response"/>
    <property type="evidence" value="ECO:0000315"/>
    <property type="project" value="TAIR"/>
</dbReference>
<dbReference type="GO" id="GO:2000031">
    <property type="term" value="P:regulation of salicylic acid mediated signaling pathway"/>
    <property type="evidence" value="ECO:0007669"/>
    <property type="project" value="InterPro"/>
</dbReference>
<dbReference type="GO" id="GO:0010337">
    <property type="term" value="P:regulation of salicylic acid metabolic process"/>
    <property type="evidence" value="ECO:0000315"/>
    <property type="project" value="TAIR"/>
</dbReference>
<dbReference type="GO" id="GO:0009651">
    <property type="term" value="P:response to salt stress"/>
    <property type="evidence" value="ECO:0000304"/>
    <property type="project" value="TAIR"/>
</dbReference>
<dbReference type="InterPro" id="IPR044663">
    <property type="entry name" value="CAD1/NSL1-like"/>
</dbReference>
<dbReference type="InterPro" id="IPR020864">
    <property type="entry name" value="MACPF"/>
</dbReference>
<dbReference type="PANTHER" id="PTHR33199">
    <property type="entry name" value="MACPF DOMAIN-CONTAINING PROTEIN CAD1"/>
    <property type="match status" value="1"/>
</dbReference>
<dbReference type="PANTHER" id="PTHR33199:SF8">
    <property type="entry name" value="MACPF DOMAIN-CONTAINING PROTEIN NSL1"/>
    <property type="match status" value="1"/>
</dbReference>
<dbReference type="Pfam" id="PF01823">
    <property type="entry name" value="MACPF"/>
    <property type="match status" value="1"/>
</dbReference>
<dbReference type="SMART" id="SM00457">
    <property type="entry name" value="MACPF"/>
    <property type="match status" value="1"/>
</dbReference>
<dbReference type="PROSITE" id="PS51412">
    <property type="entry name" value="MACPF_2"/>
    <property type="match status" value="1"/>
</dbReference>
<accession>Q9SGN6</accession>
<keyword id="KW-0381">Hypersensitive response</keyword>
<keyword id="KW-0391">Immunity</keyword>
<keyword id="KW-0399">Innate immunity</keyword>
<keyword id="KW-0611">Plant defense</keyword>
<keyword id="KW-1185">Reference proteome</keyword>
<organism>
    <name type="scientific">Arabidopsis thaliana</name>
    <name type="common">Mouse-ear cress</name>
    <dbReference type="NCBI Taxonomy" id="3702"/>
    <lineage>
        <taxon>Eukaryota</taxon>
        <taxon>Viridiplantae</taxon>
        <taxon>Streptophyta</taxon>
        <taxon>Embryophyta</taxon>
        <taxon>Tracheophyta</taxon>
        <taxon>Spermatophyta</taxon>
        <taxon>Magnoliopsida</taxon>
        <taxon>eudicotyledons</taxon>
        <taxon>Gunneridae</taxon>
        <taxon>Pentapetalae</taxon>
        <taxon>rosids</taxon>
        <taxon>malvids</taxon>
        <taxon>Brassicales</taxon>
        <taxon>Brassicaceae</taxon>
        <taxon>Camelineae</taxon>
        <taxon>Arabidopsis</taxon>
    </lineage>
</organism>